<proteinExistence type="inferred from homology"/>
<comment type="function">
    <text evidence="5">Regulates microtubule dynamics in uterine muscle cells.</text>
</comment>
<comment type="disruption phenotype">
    <text evidence="5">RNAi-mediated knockdown at the L1 larval stage causes a reduction in egg-laying, likely due to a defect in the egg-laying apparatus muscles and in hermaphrodite specific neurons.</text>
</comment>
<comment type="similarity">
    <text evidence="6">Belongs to the tubulin--tyrosine ligase family.</text>
</comment>
<comment type="caution">
    <text evidence="1 2">Although it belongs to the tubulin--tyrosine ligase family, the TTL domain lacks some of the ATP binding sites predicted to be essential for TTL activity (By similarity). Lacks tyrosine ligase activity in vitro (By similarity). Lacks glutamylation activity in vitro (By similarity).</text>
</comment>
<feature type="chain" id="PRO_0000212449" description="Tubulin--tyrosine ligase-like protein 12">
    <location>
        <begin position="1"/>
        <end position="662"/>
    </location>
</feature>
<feature type="domain" description="TTL" evidence="4">
    <location>
        <begin position="324"/>
        <end position="660"/>
    </location>
</feature>
<feature type="binding site" evidence="3">
    <location>
        <begin position="472"/>
        <end position="475"/>
    </location>
    <ligand>
        <name>ATP</name>
        <dbReference type="ChEBI" id="CHEBI:30616"/>
    </ligand>
</feature>
<feature type="binding site" evidence="3">
    <location>
        <position position="491"/>
    </location>
    <ligand>
        <name>ATP</name>
        <dbReference type="ChEBI" id="CHEBI:30616"/>
    </ligand>
</feature>
<feature type="binding site" evidence="3">
    <location>
        <position position="493"/>
    </location>
    <ligand>
        <name>ATP</name>
        <dbReference type="ChEBI" id="CHEBI:30616"/>
    </ligand>
</feature>
<gene>
    <name evidence="7" type="primary">ttll-12</name>
    <name evidence="7" type="ORF">D2013.9</name>
</gene>
<reference key="1">
    <citation type="journal article" date="1998" name="Science">
        <title>Genome sequence of the nematode C. elegans: a platform for investigating biology.</title>
        <authorList>
            <consortium name="The C. elegans sequencing consortium"/>
        </authorList>
    </citation>
    <scope>NUCLEOTIDE SEQUENCE [LARGE SCALE GENOMIC DNA]</scope>
    <source>
        <strain>Bristol N2</strain>
    </source>
</reference>
<reference key="2">
    <citation type="journal article" date="2014" name="Dev. Cell">
        <title>In situ imaging in C. elegans reveals developmental regulation of microtubule dynamics.</title>
        <authorList>
            <person name="Lacroix B."/>
            <person name="Bourdages K.G."/>
            <person name="Dorn J.F."/>
            <person name="Ihara S."/>
            <person name="Sherwood D.R."/>
            <person name="Maddox P.S."/>
            <person name="Maddox A.S."/>
        </authorList>
    </citation>
    <scope>FUNCTION</scope>
    <scope>DISRUPTION PHENOTYPE</scope>
</reference>
<keyword id="KW-0067">ATP-binding</keyword>
<keyword id="KW-0547">Nucleotide-binding</keyword>
<keyword id="KW-1185">Reference proteome</keyword>
<sequence length="662" mass="76751">MSEDRSAYPFSTFLDQHSGQLNASDVPPELWHSLYKKLSDQTFDAGDHFQIICEMNEDDEKTLFVRALEDLHNNDEDNIFLIDHFMSFSSESARKCVESTEGLVERLAGLFGIDTDSTEEVDETVEKIETSVEKEEAEHAKKISSETGNLPRHESVDARLSSYSVDDPKNELTEKVLKALWKYSQTYSVSYQLDNGEIEKKSVWYVMDDFGTRVRHSTEPNVRIVPLMFLPQNCAYSIMFLTKPVNTDEEIMMDWASNVITAQHPEWRKYIEQPWAAQDFSKETMIPDAPTLEYFTSGRNPDFLAGPTEQQTCQSAIFTSLPILKKRKIKVYADDTQLTEHLKNHKVEYVDDIKKADVIWMIKHFHDYKQLSEENPCGMINQFPFESCITVKDLLAACAMRDPAKNDWYQLTYNLNTQLPEFVARFQNRELNGQHNVWIVKPWNLARGMDMTVTEDLNQIIRMIETGPKIVCEYIPRPLLFPRPDNGNKVKFDLRYIVFLNGIAPVTAYVYNRFWIRFAINEFSLSNFEDVETHFTVFNYLDKEKILQMKCENFIETIEKAYPRIQWSEVQKDINLTIRKAIEAAAKEEAPRGVAPNVQSRAMYGVDIMLQHGDNDVIKSTLLEINFMPDTTRACQYYPDFADTVFETLFLDEIDPTKVTPI</sequence>
<accession>Q09512</accession>
<organism>
    <name type="scientific">Caenorhabditis elegans</name>
    <dbReference type="NCBI Taxonomy" id="6239"/>
    <lineage>
        <taxon>Eukaryota</taxon>
        <taxon>Metazoa</taxon>
        <taxon>Ecdysozoa</taxon>
        <taxon>Nematoda</taxon>
        <taxon>Chromadorea</taxon>
        <taxon>Rhabditida</taxon>
        <taxon>Rhabditina</taxon>
        <taxon>Rhabditomorpha</taxon>
        <taxon>Rhabditoidea</taxon>
        <taxon>Rhabditidae</taxon>
        <taxon>Peloderinae</taxon>
        <taxon>Caenorhabditis</taxon>
    </lineage>
</organism>
<dbReference type="EMBL" id="BX284602">
    <property type="protein sequence ID" value="CAA87778.1"/>
    <property type="molecule type" value="Genomic_DNA"/>
</dbReference>
<dbReference type="EMBL" id="Z47809">
    <property type="protein sequence ID" value="CAA87778.1"/>
    <property type="status" value="JOINED"/>
    <property type="molecule type" value="Genomic_DNA"/>
</dbReference>
<dbReference type="PIR" id="T20343">
    <property type="entry name" value="T20343"/>
</dbReference>
<dbReference type="RefSeq" id="NP_495990.1">
    <property type="nucleotide sequence ID" value="NM_063589.7"/>
</dbReference>
<dbReference type="SMR" id="Q09512"/>
<dbReference type="BioGRID" id="39804">
    <property type="interactions" value="3"/>
</dbReference>
<dbReference type="FunCoup" id="Q09512">
    <property type="interactions" value="2600"/>
</dbReference>
<dbReference type="STRING" id="6239.D2013.9.1"/>
<dbReference type="iPTMnet" id="Q09512"/>
<dbReference type="PaxDb" id="6239-D2013.9.2"/>
<dbReference type="PeptideAtlas" id="Q09512"/>
<dbReference type="EnsemblMetazoa" id="D2013.9.1">
    <property type="protein sequence ID" value="D2013.9.1"/>
    <property type="gene ID" value="WBGene00008405"/>
</dbReference>
<dbReference type="GeneID" id="174480"/>
<dbReference type="KEGG" id="cel:CELE_D2013.9"/>
<dbReference type="AGR" id="WB:WBGene00008405"/>
<dbReference type="CTD" id="174480"/>
<dbReference type="WormBase" id="D2013.9">
    <property type="protein sequence ID" value="CE01535"/>
    <property type="gene ID" value="WBGene00008405"/>
    <property type="gene designation" value="ttll-12"/>
</dbReference>
<dbReference type="eggNOG" id="KOG2155">
    <property type="taxonomic scope" value="Eukaryota"/>
</dbReference>
<dbReference type="GeneTree" id="ENSGT00390000006760"/>
<dbReference type="HOGENOM" id="CLU_018324_0_0_1"/>
<dbReference type="InParanoid" id="Q09512"/>
<dbReference type="OMA" id="WTPDCKR"/>
<dbReference type="OrthoDB" id="60477at2759"/>
<dbReference type="PhylomeDB" id="Q09512"/>
<dbReference type="PRO" id="PR:Q09512"/>
<dbReference type="Proteomes" id="UP000001940">
    <property type="component" value="Chromosome II"/>
</dbReference>
<dbReference type="Bgee" id="WBGene00008405">
    <property type="expression patterns" value="Expressed in germ line (C elegans) and 4 other cell types or tissues"/>
</dbReference>
<dbReference type="GO" id="GO:0005737">
    <property type="term" value="C:cytoplasm"/>
    <property type="evidence" value="ECO:0000318"/>
    <property type="project" value="GO_Central"/>
</dbReference>
<dbReference type="GO" id="GO:0005783">
    <property type="term" value="C:endoplasmic reticulum"/>
    <property type="evidence" value="ECO:0007005"/>
    <property type="project" value="WormBase"/>
</dbReference>
<dbReference type="GO" id="GO:0030017">
    <property type="term" value="C:sarcomere"/>
    <property type="evidence" value="ECO:0007005"/>
    <property type="project" value="WormBase"/>
</dbReference>
<dbReference type="GO" id="GO:0055120">
    <property type="term" value="C:striated muscle dense body"/>
    <property type="evidence" value="ECO:0007005"/>
    <property type="project" value="WormBase"/>
</dbReference>
<dbReference type="GO" id="GO:0005524">
    <property type="term" value="F:ATP binding"/>
    <property type="evidence" value="ECO:0007669"/>
    <property type="project" value="UniProtKB-KW"/>
</dbReference>
<dbReference type="GO" id="GO:0018991">
    <property type="term" value="P:egg-laying behavior"/>
    <property type="evidence" value="ECO:0000315"/>
    <property type="project" value="WormBase"/>
</dbReference>
<dbReference type="GO" id="GO:0036211">
    <property type="term" value="P:protein modification process"/>
    <property type="evidence" value="ECO:0007669"/>
    <property type="project" value="InterPro"/>
</dbReference>
<dbReference type="Gene3D" id="3.30.470.20">
    <property type="entry name" value="ATP-grasp fold, B domain"/>
    <property type="match status" value="1"/>
</dbReference>
<dbReference type="InterPro" id="IPR004344">
    <property type="entry name" value="TTL/TTLL_fam"/>
</dbReference>
<dbReference type="InterPro" id="IPR027749">
    <property type="entry name" value="TTLL12"/>
</dbReference>
<dbReference type="PANTHER" id="PTHR46088">
    <property type="entry name" value="TUBULIN--TYROSINE LIGASE-LIKE PROTEIN 12"/>
    <property type="match status" value="1"/>
</dbReference>
<dbReference type="PANTHER" id="PTHR46088:SF1">
    <property type="entry name" value="TUBULIN--TYROSINE LIGASE-LIKE PROTEIN 12"/>
    <property type="match status" value="1"/>
</dbReference>
<dbReference type="Pfam" id="PF03133">
    <property type="entry name" value="TTL"/>
    <property type="match status" value="1"/>
</dbReference>
<dbReference type="SUPFAM" id="SSF56059">
    <property type="entry name" value="Glutathione synthetase ATP-binding domain-like"/>
    <property type="match status" value="1"/>
</dbReference>
<dbReference type="PROSITE" id="PS51221">
    <property type="entry name" value="TTL"/>
    <property type="match status" value="1"/>
</dbReference>
<evidence type="ECO:0000250" key="1">
    <source>
        <dbReference type="UniProtKB" id="Q14166"/>
    </source>
</evidence>
<evidence type="ECO:0000250" key="2">
    <source>
        <dbReference type="UniProtKB" id="Q3UDE2"/>
    </source>
</evidence>
<evidence type="ECO:0000250" key="3">
    <source>
        <dbReference type="UniProtKB" id="Q6ZT98"/>
    </source>
</evidence>
<evidence type="ECO:0000255" key="4">
    <source>
        <dbReference type="PROSITE-ProRule" id="PRU00568"/>
    </source>
</evidence>
<evidence type="ECO:0000269" key="5">
    <source>
    </source>
</evidence>
<evidence type="ECO:0000305" key="6"/>
<evidence type="ECO:0000312" key="7">
    <source>
        <dbReference type="WormBase" id="D2013.9"/>
    </source>
</evidence>
<protein>
    <recommendedName>
        <fullName>Tubulin--tyrosine ligase-like protein 12</fullName>
    </recommendedName>
    <alternativeName>
        <fullName evidence="6">Inactive tubulin--tyrosine ligase-like protein 12</fullName>
    </alternativeName>
</protein>
<name>TTL12_CAEEL</name>